<keyword id="KW-1185">Reference proteome</keyword>
<name>DHR25_ORYSJ</name>
<dbReference type="EMBL" id="X57327">
    <property type="protein sequence ID" value="CAA40604.1"/>
    <property type="status" value="ALT_FRAME"/>
    <property type="molecule type" value="mRNA"/>
</dbReference>
<dbReference type="EMBL" id="AY333185">
    <property type="protein sequence ID" value="AAQ19326.1"/>
    <property type="molecule type" value="mRNA"/>
</dbReference>
<dbReference type="EMBL" id="AP003245">
    <property type="protein sequence ID" value="BAD81788.1"/>
    <property type="status" value="ALT_SEQ"/>
    <property type="molecule type" value="Genomic_DNA"/>
</dbReference>
<dbReference type="EMBL" id="AP014957">
    <property type="status" value="NOT_ANNOTATED_CDS"/>
    <property type="molecule type" value="Genomic_DNA"/>
</dbReference>
<dbReference type="PIR" id="S19132">
    <property type="entry name" value="S19132"/>
</dbReference>
<dbReference type="RefSeq" id="XP_015621140.1">
    <property type="nucleotide sequence ID" value="XM_015765654.1"/>
</dbReference>
<dbReference type="SMR" id="P30287"/>
<dbReference type="FunCoup" id="P30287">
    <property type="interactions" value="181"/>
</dbReference>
<dbReference type="STRING" id="39947.P30287"/>
<dbReference type="PaxDb" id="39947-P30287"/>
<dbReference type="eggNOG" id="ENOG502S48F">
    <property type="taxonomic scope" value="Eukaryota"/>
</dbReference>
<dbReference type="InParanoid" id="P30287"/>
<dbReference type="OrthoDB" id="685434at2759"/>
<dbReference type="Proteomes" id="UP000000763">
    <property type="component" value="Chromosome 1"/>
</dbReference>
<dbReference type="Proteomes" id="UP000059680">
    <property type="component" value="Chromosome 1"/>
</dbReference>
<dbReference type="GO" id="GO:0009631">
    <property type="term" value="P:cold acclimation"/>
    <property type="evidence" value="ECO:0000318"/>
    <property type="project" value="GO_Central"/>
</dbReference>
<dbReference type="GO" id="GO:0009737">
    <property type="term" value="P:response to abscisic acid"/>
    <property type="evidence" value="ECO:0000318"/>
    <property type="project" value="GO_Central"/>
</dbReference>
<dbReference type="GO" id="GO:0009414">
    <property type="term" value="P:response to water deprivation"/>
    <property type="evidence" value="ECO:0000318"/>
    <property type="project" value="GO_Central"/>
</dbReference>
<dbReference type="InterPro" id="IPR000167">
    <property type="entry name" value="Dehydrin"/>
</dbReference>
<dbReference type="InterPro" id="IPR030513">
    <property type="entry name" value="Dehydrin_CS"/>
</dbReference>
<dbReference type="PANTHER" id="PTHR33346:SF42">
    <property type="entry name" value="DEHYDRIN XERO 1"/>
    <property type="match status" value="1"/>
</dbReference>
<dbReference type="PANTHER" id="PTHR33346">
    <property type="entry name" value="DEHYDRIN XERO 2-RELATED"/>
    <property type="match status" value="1"/>
</dbReference>
<dbReference type="Pfam" id="PF00257">
    <property type="entry name" value="Dehydrin"/>
    <property type="match status" value="1"/>
</dbReference>
<dbReference type="PROSITE" id="PS00315">
    <property type="entry name" value="DEHYDRIN_1"/>
    <property type="match status" value="1"/>
</dbReference>
<dbReference type="PROSITE" id="PS00823">
    <property type="entry name" value="DEHYDRIN_2"/>
    <property type="match status" value="2"/>
</dbReference>
<protein>
    <recommendedName>
        <fullName>Dehydrin Rab25</fullName>
    </recommendedName>
    <alternativeName>
        <fullName>Drought-resistant protein 1</fullName>
    </alternativeName>
    <alternativeName>
        <fullName>rDRP1</fullName>
    </alternativeName>
</protein>
<feature type="chain" id="PRO_0000100056" description="Dehydrin Rab25">
    <location>
        <begin position="1"/>
        <end position="228"/>
    </location>
</feature>
<feature type="region of interest" description="Disordered" evidence="1">
    <location>
        <begin position="1"/>
        <end position="68"/>
    </location>
</feature>
<feature type="region of interest" description="Disordered" evidence="1">
    <location>
        <begin position="115"/>
        <end position="228"/>
    </location>
</feature>
<feature type="compositionally biased region" description="Basic and acidic residues" evidence="1">
    <location>
        <begin position="169"/>
        <end position="187"/>
    </location>
</feature>
<feature type="compositionally biased region" description="Basic and acidic residues" evidence="1">
    <location>
        <begin position="212"/>
        <end position="228"/>
    </location>
</feature>
<reference key="1">
    <citation type="journal article" date="1992" name="Plant Mol. Biol.">
        <title>Nucleotide sequence of a rice rab16 homologue gene.</title>
        <authorList>
            <person name="Kusano T."/>
            <person name="Aguan K."/>
            <person name="Abe M."/>
            <person name="Sugawara K."/>
        </authorList>
    </citation>
    <scope>NUCLEOTIDE SEQUENCE [MRNA]</scope>
    <source>
        <strain>cv. Akitakomachi</strain>
    </source>
</reference>
<reference key="2">
    <citation type="submission" date="2003-07" db="EMBL/GenBank/DDBJ databases">
        <title>Isolation a rice dehydrin gene and show drought resistant in transgenic plant.</title>
        <authorList>
            <person name="Yao Q."/>
            <person name="Peng R."/>
            <person name="Xiong A."/>
        </authorList>
    </citation>
    <scope>NUCLEOTIDE SEQUENCE [MRNA]</scope>
</reference>
<reference key="3">
    <citation type="journal article" date="2002" name="Nature">
        <title>The genome sequence and structure of rice chromosome 1.</title>
        <authorList>
            <person name="Sasaki T."/>
            <person name="Matsumoto T."/>
            <person name="Yamamoto K."/>
            <person name="Sakata K."/>
            <person name="Baba T."/>
            <person name="Katayose Y."/>
            <person name="Wu J."/>
            <person name="Niimura Y."/>
            <person name="Cheng Z."/>
            <person name="Nagamura Y."/>
            <person name="Antonio B.A."/>
            <person name="Kanamori H."/>
            <person name="Hosokawa S."/>
            <person name="Masukawa M."/>
            <person name="Arikawa K."/>
            <person name="Chiden Y."/>
            <person name="Hayashi M."/>
            <person name="Okamoto M."/>
            <person name="Ando T."/>
            <person name="Aoki H."/>
            <person name="Arita K."/>
            <person name="Hamada M."/>
            <person name="Harada C."/>
            <person name="Hijishita S."/>
            <person name="Honda M."/>
            <person name="Ichikawa Y."/>
            <person name="Idonuma A."/>
            <person name="Iijima M."/>
            <person name="Ikeda M."/>
            <person name="Ikeno M."/>
            <person name="Ito S."/>
            <person name="Ito T."/>
            <person name="Ito Y."/>
            <person name="Ito Y."/>
            <person name="Iwabuchi A."/>
            <person name="Kamiya K."/>
            <person name="Karasawa W."/>
            <person name="Katagiri S."/>
            <person name="Kikuta A."/>
            <person name="Kobayashi N."/>
            <person name="Kono I."/>
            <person name="Machita K."/>
            <person name="Maehara T."/>
            <person name="Mizuno H."/>
            <person name="Mizubayashi T."/>
            <person name="Mukai Y."/>
            <person name="Nagasaki H."/>
            <person name="Nakashima M."/>
            <person name="Nakama Y."/>
            <person name="Nakamichi Y."/>
            <person name="Nakamura M."/>
            <person name="Namiki N."/>
            <person name="Negishi M."/>
            <person name="Ohta I."/>
            <person name="Ono N."/>
            <person name="Saji S."/>
            <person name="Sakai K."/>
            <person name="Shibata M."/>
            <person name="Shimokawa T."/>
            <person name="Shomura A."/>
            <person name="Song J."/>
            <person name="Takazaki Y."/>
            <person name="Terasawa K."/>
            <person name="Tsuji K."/>
            <person name="Waki K."/>
            <person name="Yamagata H."/>
            <person name="Yamane H."/>
            <person name="Yoshiki S."/>
            <person name="Yoshihara R."/>
            <person name="Yukawa K."/>
            <person name="Zhong H."/>
            <person name="Iwama H."/>
            <person name="Endo T."/>
            <person name="Ito H."/>
            <person name="Hahn J.H."/>
            <person name="Kim H.-I."/>
            <person name="Eun M.-Y."/>
            <person name="Yano M."/>
            <person name="Jiang J."/>
            <person name="Gojobori T."/>
        </authorList>
    </citation>
    <scope>NUCLEOTIDE SEQUENCE [LARGE SCALE GENOMIC DNA]</scope>
    <source>
        <strain>cv. Nipponbare</strain>
    </source>
</reference>
<reference key="4">
    <citation type="journal article" date="2005" name="Nature">
        <title>The map-based sequence of the rice genome.</title>
        <authorList>
            <consortium name="International rice genome sequencing project (IRGSP)"/>
        </authorList>
    </citation>
    <scope>NUCLEOTIDE SEQUENCE [LARGE SCALE GENOMIC DNA]</scope>
    <source>
        <strain>cv. Nipponbare</strain>
    </source>
</reference>
<reference key="5">
    <citation type="journal article" date="2013" name="Rice">
        <title>Improvement of the Oryza sativa Nipponbare reference genome using next generation sequence and optical map data.</title>
        <authorList>
            <person name="Kawahara Y."/>
            <person name="de la Bastide M."/>
            <person name="Hamilton J.P."/>
            <person name="Kanamori H."/>
            <person name="McCombie W.R."/>
            <person name="Ouyang S."/>
            <person name="Schwartz D.C."/>
            <person name="Tanaka T."/>
            <person name="Wu J."/>
            <person name="Zhou S."/>
            <person name="Childs K.L."/>
            <person name="Davidson R.M."/>
            <person name="Lin H."/>
            <person name="Quesada-Ocampo L."/>
            <person name="Vaillancourt B."/>
            <person name="Sakai H."/>
            <person name="Lee S.S."/>
            <person name="Kim J."/>
            <person name="Numa H."/>
            <person name="Itoh T."/>
            <person name="Buell C.R."/>
            <person name="Matsumoto T."/>
        </authorList>
    </citation>
    <scope>GENOME REANNOTATION</scope>
    <source>
        <strain>cv. Nipponbare</strain>
    </source>
</reference>
<proteinExistence type="evidence at transcript level"/>
<accession>P30287</accession>
<accession>Q5N9R4</accession>
<accession>Q7E0Y0</accession>
<sequence length="228" mass="23236">MAEHATGVYGHPYPRVDQYGNPVPPVDQYGNPVPDEPAPRDTAAGYVAPPDPAVSTGDYGLAGAEAPHPHESAVMSGAAAAAVAPGGEAYTRDGGGVVPPAGEKTFAYEGTVSAAGVTGASGQLQPTTREEGHTTLGETLRRSGKSSSSSSSSSEDDGQGGRRKKKSIKEKIKEKLPGSHKQEEQKQAGHTAPAAGTGTGTGTHAAGKHEKKGIVEKIKEKLPGHGHH</sequence>
<organism>
    <name type="scientific">Oryza sativa subsp. japonica</name>
    <name type="common">Rice</name>
    <dbReference type="NCBI Taxonomy" id="39947"/>
    <lineage>
        <taxon>Eukaryota</taxon>
        <taxon>Viridiplantae</taxon>
        <taxon>Streptophyta</taxon>
        <taxon>Embryophyta</taxon>
        <taxon>Tracheophyta</taxon>
        <taxon>Spermatophyta</taxon>
        <taxon>Magnoliopsida</taxon>
        <taxon>Liliopsida</taxon>
        <taxon>Poales</taxon>
        <taxon>Poaceae</taxon>
        <taxon>BOP clade</taxon>
        <taxon>Oryzoideae</taxon>
        <taxon>Oryzeae</taxon>
        <taxon>Oryzinae</taxon>
        <taxon>Oryza</taxon>
        <taxon>Oryza sativa</taxon>
    </lineage>
</organism>
<evidence type="ECO:0000256" key="1">
    <source>
        <dbReference type="SAM" id="MobiDB-lite"/>
    </source>
</evidence>
<evidence type="ECO:0000305" key="2"/>
<gene>
    <name type="primary">RAB25</name>
    <name type="ordered locus">Os01g0702500</name>
    <name type="ordered locus">LOC_Os01g50700</name>
    <name type="ORF">P0421H07.13</name>
</gene>
<comment type="similarity">
    <text evidence="2">Belongs to the plant dehydrin family.</text>
</comment>
<comment type="sequence caution" evidence="2">
    <conflict type="erroneous gene model prediction">
        <sequence resource="EMBL-CDS" id="BAD81788"/>
    </conflict>
</comment>
<comment type="sequence caution" evidence="2">
    <conflict type="frameshift">
        <sequence resource="EMBL-CDS" id="CAA40604"/>
    </conflict>
</comment>